<accession>Q8ZJF6</accession>
<accession>Q0WKF0</accession>
<evidence type="ECO:0000255" key="1">
    <source>
        <dbReference type="HAMAP-Rule" id="MF_00110"/>
    </source>
</evidence>
<organism>
    <name type="scientific">Yersinia pestis</name>
    <dbReference type="NCBI Taxonomy" id="632"/>
    <lineage>
        <taxon>Bacteria</taxon>
        <taxon>Pseudomonadati</taxon>
        <taxon>Pseudomonadota</taxon>
        <taxon>Gammaproteobacteria</taxon>
        <taxon>Enterobacterales</taxon>
        <taxon>Yersiniaceae</taxon>
        <taxon>Yersinia</taxon>
    </lineage>
</organism>
<comment type="function">
    <text evidence="1">Catalyzes the conversion of 3-deoxy-D-arabino-heptulosonate 7-phosphate (DAHP) to dehydroquinate (DHQ).</text>
</comment>
<comment type="catalytic activity">
    <reaction evidence="1">
        <text>7-phospho-2-dehydro-3-deoxy-D-arabino-heptonate = 3-dehydroquinate + phosphate</text>
        <dbReference type="Rhea" id="RHEA:21968"/>
        <dbReference type="ChEBI" id="CHEBI:32364"/>
        <dbReference type="ChEBI" id="CHEBI:43474"/>
        <dbReference type="ChEBI" id="CHEBI:58394"/>
        <dbReference type="EC" id="4.2.3.4"/>
    </reaction>
</comment>
<comment type="cofactor">
    <cofactor evidence="1">
        <name>NAD(+)</name>
        <dbReference type="ChEBI" id="CHEBI:57540"/>
    </cofactor>
</comment>
<comment type="cofactor">
    <cofactor evidence="1">
        <name>Co(2+)</name>
        <dbReference type="ChEBI" id="CHEBI:48828"/>
    </cofactor>
    <cofactor evidence="1">
        <name>Zn(2+)</name>
        <dbReference type="ChEBI" id="CHEBI:29105"/>
    </cofactor>
    <text evidence="1">Binds 1 divalent metal cation per subunit. Can use either Co(2+) or Zn(2+).</text>
</comment>
<comment type="pathway">
    <text evidence="1">Metabolic intermediate biosynthesis; chorismate biosynthesis; chorismate from D-erythrose 4-phosphate and phosphoenolpyruvate: step 2/7.</text>
</comment>
<comment type="subcellular location">
    <subcellularLocation>
        <location evidence="1">Cytoplasm</location>
    </subcellularLocation>
</comment>
<comment type="similarity">
    <text evidence="1">Belongs to the sugar phosphate cyclases superfamily. Dehydroquinate synthase family.</text>
</comment>
<gene>
    <name evidence="1" type="primary">aroB</name>
    <name type="ordered locus">YPO0152</name>
    <name type="ordered locus">y3934</name>
    <name type="ordered locus">YP_0154</name>
</gene>
<name>AROB_YERPE</name>
<dbReference type="EC" id="4.2.3.4" evidence="1"/>
<dbReference type="EMBL" id="AL590842">
    <property type="protein sequence ID" value="CAL18838.1"/>
    <property type="molecule type" value="Genomic_DNA"/>
</dbReference>
<dbReference type="EMBL" id="AE009952">
    <property type="protein sequence ID" value="AAM87478.1"/>
    <property type="molecule type" value="Genomic_DNA"/>
</dbReference>
<dbReference type="EMBL" id="AE017042">
    <property type="protein sequence ID" value="AAS60432.1"/>
    <property type="molecule type" value="Genomic_DNA"/>
</dbReference>
<dbReference type="PIR" id="AE0019">
    <property type="entry name" value="AE0019"/>
</dbReference>
<dbReference type="RefSeq" id="WP_002208898.1">
    <property type="nucleotide sequence ID" value="NZ_WUCM01000004.1"/>
</dbReference>
<dbReference type="RefSeq" id="YP_002345238.1">
    <property type="nucleotide sequence ID" value="NC_003143.1"/>
</dbReference>
<dbReference type="SMR" id="Q8ZJF6"/>
<dbReference type="IntAct" id="Q8ZJF6">
    <property type="interactions" value="1"/>
</dbReference>
<dbReference type="STRING" id="214092.YPO0152"/>
<dbReference type="PaxDb" id="214092-YPO0152"/>
<dbReference type="DNASU" id="1148881"/>
<dbReference type="EnsemblBacteria" id="AAS60432">
    <property type="protein sequence ID" value="AAS60432"/>
    <property type="gene ID" value="YP_0154"/>
</dbReference>
<dbReference type="GeneID" id="57974449"/>
<dbReference type="KEGG" id="ype:YPO0152"/>
<dbReference type="KEGG" id="ypk:y3934"/>
<dbReference type="KEGG" id="ypm:YP_0154"/>
<dbReference type="PATRIC" id="fig|214092.21.peg.380"/>
<dbReference type="eggNOG" id="COG0337">
    <property type="taxonomic scope" value="Bacteria"/>
</dbReference>
<dbReference type="HOGENOM" id="CLU_001201_0_2_6"/>
<dbReference type="OMA" id="IAIGMRM"/>
<dbReference type="OrthoDB" id="9806583at2"/>
<dbReference type="UniPathway" id="UPA00053">
    <property type="reaction ID" value="UER00085"/>
</dbReference>
<dbReference type="Proteomes" id="UP000000815">
    <property type="component" value="Chromosome"/>
</dbReference>
<dbReference type="Proteomes" id="UP000001019">
    <property type="component" value="Chromosome"/>
</dbReference>
<dbReference type="Proteomes" id="UP000002490">
    <property type="component" value="Chromosome"/>
</dbReference>
<dbReference type="GO" id="GO:0005737">
    <property type="term" value="C:cytoplasm"/>
    <property type="evidence" value="ECO:0007669"/>
    <property type="project" value="UniProtKB-SubCell"/>
</dbReference>
<dbReference type="GO" id="GO:0003856">
    <property type="term" value="F:3-dehydroquinate synthase activity"/>
    <property type="evidence" value="ECO:0000318"/>
    <property type="project" value="GO_Central"/>
</dbReference>
<dbReference type="GO" id="GO:0046872">
    <property type="term" value="F:metal ion binding"/>
    <property type="evidence" value="ECO:0007669"/>
    <property type="project" value="UniProtKB-KW"/>
</dbReference>
<dbReference type="GO" id="GO:0000166">
    <property type="term" value="F:nucleotide binding"/>
    <property type="evidence" value="ECO:0007669"/>
    <property type="project" value="UniProtKB-KW"/>
</dbReference>
<dbReference type="GO" id="GO:0008652">
    <property type="term" value="P:amino acid biosynthetic process"/>
    <property type="evidence" value="ECO:0007669"/>
    <property type="project" value="UniProtKB-KW"/>
</dbReference>
<dbReference type="GO" id="GO:0009073">
    <property type="term" value="P:aromatic amino acid family biosynthetic process"/>
    <property type="evidence" value="ECO:0000318"/>
    <property type="project" value="GO_Central"/>
</dbReference>
<dbReference type="GO" id="GO:0009423">
    <property type="term" value="P:chorismate biosynthetic process"/>
    <property type="evidence" value="ECO:0007669"/>
    <property type="project" value="UniProtKB-UniRule"/>
</dbReference>
<dbReference type="CDD" id="cd08195">
    <property type="entry name" value="DHQS"/>
    <property type="match status" value="1"/>
</dbReference>
<dbReference type="FunFam" id="1.20.1090.10:FF:000002">
    <property type="entry name" value="3-dehydroquinate synthase"/>
    <property type="match status" value="1"/>
</dbReference>
<dbReference type="FunFam" id="3.40.50.1970:FF:000001">
    <property type="entry name" value="3-dehydroquinate synthase"/>
    <property type="match status" value="1"/>
</dbReference>
<dbReference type="Gene3D" id="3.40.50.1970">
    <property type="match status" value="1"/>
</dbReference>
<dbReference type="Gene3D" id="1.20.1090.10">
    <property type="entry name" value="Dehydroquinate synthase-like - alpha domain"/>
    <property type="match status" value="1"/>
</dbReference>
<dbReference type="HAMAP" id="MF_00110">
    <property type="entry name" value="DHQ_synthase"/>
    <property type="match status" value="1"/>
</dbReference>
<dbReference type="InterPro" id="IPR050071">
    <property type="entry name" value="Dehydroquinate_synthase"/>
</dbReference>
<dbReference type="InterPro" id="IPR016037">
    <property type="entry name" value="DHQ_synth_AroB"/>
</dbReference>
<dbReference type="InterPro" id="IPR030963">
    <property type="entry name" value="DHQ_synth_fam"/>
</dbReference>
<dbReference type="InterPro" id="IPR030960">
    <property type="entry name" value="DHQS/DOIS_N"/>
</dbReference>
<dbReference type="InterPro" id="IPR056179">
    <property type="entry name" value="DHQS_C"/>
</dbReference>
<dbReference type="NCBIfam" id="TIGR01357">
    <property type="entry name" value="aroB"/>
    <property type="match status" value="1"/>
</dbReference>
<dbReference type="PANTHER" id="PTHR43622">
    <property type="entry name" value="3-DEHYDROQUINATE SYNTHASE"/>
    <property type="match status" value="1"/>
</dbReference>
<dbReference type="PANTHER" id="PTHR43622:SF7">
    <property type="entry name" value="3-DEHYDROQUINATE SYNTHASE, CHLOROPLASTIC"/>
    <property type="match status" value="1"/>
</dbReference>
<dbReference type="Pfam" id="PF01761">
    <property type="entry name" value="DHQ_synthase"/>
    <property type="match status" value="1"/>
</dbReference>
<dbReference type="Pfam" id="PF24621">
    <property type="entry name" value="DHQS_C"/>
    <property type="match status" value="1"/>
</dbReference>
<dbReference type="PIRSF" id="PIRSF001455">
    <property type="entry name" value="DHQ_synth"/>
    <property type="match status" value="1"/>
</dbReference>
<dbReference type="SUPFAM" id="SSF56796">
    <property type="entry name" value="Dehydroquinate synthase-like"/>
    <property type="match status" value="1"/>
</dbReference>
<reference key="1">
    <citation type="journal article" date="2001" name="Nature">
        <title>Genome sequence of Yersinia pestis, the causative agent of plague.</title>
        <authorList>
            <person name="Parkhill J."/>
            <person name="Wren B.W."/>
            <person name="Thomson N.R."/>
            <person name="Titball R.W."/>
            <person name="Holden M.T.G."/>
            <person name="Prentice M.B."/>
            <person name="Sebaihia M."/>
            <person name="James K.D."/>
            <person name="Churcher C.M."/>
            <person name="Mungall K.L."/>
            <person name="Baker S."/>
            <person name="Basham D."/>
            <person name="Bentley S.D."/>
            <person name="Brooks K."/>
            <person name="Cerdeno-Tarraga A.-M."/>
            <person name="Chillingworth T."/>
            <person name="Cronin A."/>
            <person name="Davies R.M."/>
            <person name="Davis P."/>
            <person name="Dougan G."/>
            <person name="Feltwell T."/>
            <person name="Hamlin N."/>
            <person name="Holroyd S."/>
            <person name="Jagels K."/>
            <person name="Karlyshev A.V."/>
            <person name="Leather S."/>
            <person name="Moule S."/>
            <person name="Oyston P.C.F."/>
            <person name="Quail M.A."/>
            <person name="Rutherford K.M."/>
            <person name="Simmonds M."/>
            <person name="Skelton J."/>
            <person name="Stevens K."/>
            <person name="Whitehead S."/>
            <person name="Barrell B.G."/>
        </authorList>
    </citation>
    <scope>NUCLEOTIDE SEQUENCE [LARGE SCALE GENOMIC DNA]</scope>
    <source>
        <strain>CO-92 / Biovar Orientalis</strain>
    </source>
</reference>
<reference key="2">
    <citation type="journal article" date="2002" name="J. Bacteriol.">
        <title>Genome sequence of Yersinia pestis KIM.</title>
        <authorList>
            <person name="Deng W."/>
            <person name="Burland V."/>
            <person name="Plunkett G. III"/>
            <person name="Boutin A."/>
            <person name="Mayhew G.F."/>
            <person name="Liss P."/>
            <person name="Perna N.T."/>
            <person name="Rose D.J."/>
            <person name="Mau B."/>
            <person name="Zhou S."/>
            <person name="Schwartz D.C."/>
            <person name="Fetherston J.D."/>
            <person name="Lindler L.E."/>
            <person name="Brubaker R.R."/>
            <person name="Plano G.V."/>
            <person name="Straley S.C."/>
            <person name="McDonough K.A."/>
            <person name="Nilles M.L."/>
            <person name="Matson J.S."/>
            <person name="Blattner F.R."/>
            <person name="Perry R.D."/>
        </authorList>
    </citation>
    <scope>NUCLEOTIDE SEQUENCE [LARGE SCALE GENOMIC DNA]</scope>
    <source>
        <strain>KIM10+ / Biovar Mediaevalis</strain>
    </source>
</reference>
<reference key="3">
    <citation type="journal article" date="2004" name="DNA Res.">
        <title>Complete genome sequence of Yersinia pestis strain 91001, an isolate avirulent to humans.</title>
        <authorList>
            <person name="Song Y."/>
            <person name="Tong Z."/>
            <person name="Wang J."/>
            <person name="Wang L."/>
            <person name="Guo Z."/>
            <person name="Han Y."/>
            <person name="Zhang J."/>
            <person name="Pei D."/>
            <person name="Zhou D."/>
            <person name="Qin H."/>
            <person name="Pang X."/>
            <person name="Han Y."/>
            <person name="Zhai J."/>
            <person name="Li M."/>
            <person name="Cui B."/>
            <person name="Qi Z."/>
            <person name="Jin L."/>
            <person name="Dai R."/>
            <person name="Chen F."/>
            <person name="Li S."/>
            <person name="Ye C."/>
            <person name="Du Z."/>
            <person name="Lin W."/>
            <person name="Wang J."/>
            <person name="Yu J."/>
            <person name="Yang H."/>
            <person name="Wang J."/>
            <person name="Huang P."/>
            <person name="Yang R."/>
        </authorList>
    </citation>
    <scope>NUCLEOTIDE SEQUENCE [LARGE SCALE GENOMIC DNA]</scope>
    <source>
        <strain>91001 / Biovar Mediaevalis</strain>
    </source>
</reference>
<feature type="chain" id="PRO_0000140813" description="3-dehydroquinate synthase">
    <location>
        <begin position="1"/>
        <end position="362"/>
    </location>
</feature>
<feature type="binding site" evidence="1">
    <location>
        <begin position="71"/>
        <end position="76"/>
    </location>
    <ligand>
        <name>NAD(+)</name>
        <dbReference type="ChEBI" id="CHEBI:57540"/>
    </ligand>
</feature>
<feature type="binding site" evidence="1">
    <location>
        <begin position="105"/>
        <end position="109"/>
    </location>
    <ligand>
        <name>NAD(+)</name>
        <dbReference type="ChEBI" id="CHEBI:57540"/>
    </ligand>
</feature>
<feature type="binding site" evidence="1">
    <location>
        <begin position="129"/>
        <end position="130"/>
    </location>
    <ligand>
        <name>NAD(+)</name>
        <dbReference type="ChEBI" id="CHEBI:57540"/>
    </ligand>
</feature>
<feature type="binding site" evidence="1">
    <location>
        <position position="142"/>
    </location>
    <ligand>
        <name>NAD(+)</name>
        <dbReference type="ChEBI" id="CHEBI:57540"/>
    </ligand>
</feature>
<feature type="binding site" evidence="1">
    <location>
        <position position="151"/>
    </location>
    <ligand>
        <name>NAD(+)</name>
        <dbReference type="ChEBI" id="CHEBI:57540"/>
    </ligand>
</feature>
<feature type="binding site" evidence="1">
    <location>
        <begin position="169"/>
        <end position="172"/>
    </location>
    <ligand>
        <name>NAD(+)</name>
        <dbReference type="ChEBI" id="CHEBI:57540"/>
    </ligand>
</feature>
<feature type="binding site" evidence="1">
    <location>
        <position position="184"/>
    </location>
    <ligand>
        <name>Zn(2+)</name>
        <dbReference type="ChEBI" id="CHEBI:29105"/>
    </ligand>
</feature>
<feature type="binding site" evidence="1">
    <location>
        <position position="248"/>
    </location>
    <ligand>
        <name>Zn(2+)</name>
        <dbReference type="ChEBI" id="CHEBI:29105"/>
    </ligand>
</feature>
<feature type="binding site" evidence="1">
    <location>
        <position position="265"/>
    </location>
    <ligand>
        <name>Zn(2+)</name>
        <dbReference type="ChEBI" id="CHEBI:29105"/>
    </ligand>
</feature>
<keyword id="KW-0028">Amino-acid biosynthesis</keyword>
<keyword id="KW-0057">Aromatic amino acid biosynthesis</keyword>
<keyword id="KW-0170">Cobalt</keyword>
<keyword id="KW-0963">Cytoplasm</keyword>
<keyword id="KW-0456">Lyase</keyword>
<keyword id="KW-0479">Metal-binding</keyword>
<keyword id="KW-0520">NAD</keyword>
<keyword id="KW-0547">Nucleotide-binding</keyword>
<keyword id="KW-1185">Reference proteome</keyword>
<keyword id="KW-0862">Zinc</keyword>
<protein>
    <recommendedName>
        <fullName evidence="1">3-dehydroquinate synthase</fullName>
        <shortName evidence="1">DHQS</shortName>
        <ecNumber evidence="1">4.2.3.4</ecNumber>
    </recommendedName>
</protein>
<proteinExistence type="inferred from homology"/>
<sequence>MEKITVTLGERSYPITIAAGLFNDPASFKPLKAGDQVMLVTNQTLAPLYLDSLRAVLEHGGIKVDQVILPDGEQYKSLSVMEQVFSALLEKPHGRDTTLVALGGGVVGDLTGFAAACYQRGVRFIQVPTTLLSQVDSSVGGKTAVNHPLGKNMIGAFYQPASVVVDLNCLKTLPPRELASGLAEVIKYGIILDAAFFDWLENNIDALLALDMSALAYCIRRCCELKADVVAADEREESGARALLNLGHTYGHAIEAEMGYGVWLHGEAVAAGMVMAAQTSRRLGQLSVSDVERIKKLLLRAGLPVCGPKEMAPESYLPHMMRDKKVLAGELRLVLPTAIGKSEIRGGVAHDMVLASIADCRP</sequence>